<sequence length="164" mass="19492">MDMTNAQRLILSNQYKMMTMLDPENAERYRRQQTIVERGFGLQMRELDRDFGEMSEDTCRTIINIMEMHHALQVSWGNLKEKQDLDERRISFLGFDAATESRYLSYVRFMVNTEGRYTHFDSGTHGFNSQTPMWDKYQRMLAIWQSCPRQYHLSAVEISQIINA</sequence>
<evidence type="ECO:0000255" key="1">
    <source>
        <dbReference type="HAMAP-Rule" id="MF_00762"/>
    </source>
</evidence>
<evidence type="ECO:0000305" key="2"/>
<organism>
    <name type="scientific">Yersinia pestis</name>
    <dbReference type="NCBI Taxonomy" id="632"/>
    <lineage>
        <taxon>Bacteria</taxon>
        <taxon>Pseudomonadati</taxon>
        <taxon>Pseudomonadota</taxon>
        <taxon>Gammaproteobacteria</taxon>
        <taxon>Enterobacterales</taxon>
        <taxon>Yersiniaceae</taxon>
        <taxon>Yersinia</taxon>
    </lineage>
</organism>
<accession>Q8ZDJ9</accession>
<accession>Q0WDW4</accession>
<accession>Q8D0T3</accession>
<feature type="chain" id="PRO_0000218174" description="UPF0304 protein YPO2563/y1624/YP_2374">
    <location>
        <begin position="1"/>
        <end position="164"/>
    </location>
</feature>
<reference key="1">
    <citation type="journal article" date="2001" name="Nature">
        <title>Genome sequence of Yersinia pestis, the causative agent of plague.</title>
        <authorList>
            <person name="Parkhill J."/>
            <person name="Wren B.W."/>
            <person name="Thomson N.R."/>
            <person name="Titball R.W."/>
            <person name="Holden M.T.G."/>
            <person name="Prentice M.B."/>
            <person name="Sebaihia M."/>
            <person name="James K.D."/>
            <person name="Churcher C.M."/>
            <person name="Mungall K.L."/>
            <person name="Baker S."/>
            <person name="Basham D."/>
            <person name="Bentley S.D."/>
            <person name="Brooks K."/>
            <person name="Cerdeno-Tarraga A.-M."/>
            <person name="Chillingworth T."/>
            <person name="Cronin A."/>
            <person name="Davies R.M."/>
            <person name="Davis P."/>
            <person name="Dougan G."/>
            <person name="Feltwell T."/>
            <person name="Hamlin N."/>
            <person name="Holroyd S."/>
            <person name="Jagels K."/>
            <person name="Karlyshev A.V."/>
            <person name="Leather S."/>
            <person name="Moule S."/>
            <person name="Oyston P.C.F."/>
            <person name="Quail M.A."/>
            <person name="Rutherford K.M."/>
            <person name="Simmonds M."/>
            <person name="Skelton J."/>
            <person name="Stevens K."/>
            <person name="Whitehead S."/>
            <person name="Barrell B.G."/>
        </authorList>
    </citation>
    <scope>NUCLEOTIDE SEQUENCE [LARGE SCALE GENOMIC DNA]</scope>
    <source>
        <strain>CO-92 / Biovar Orientalis</strain>
    </source>
</reference>
<reference key="2">
    <citation type="journal article" date="2002" name="J. Bacteriol.">
        <title>Genome sequence of Yersinia pestis KIM.</title>
        <authorList>
            <person name="Deng W."/>
            <person name="Burland V."/>
            <person name="Plunkett G. III"/>
            <person name="Boutin A."/>
            <person name="Mayhew G.F."/>
            <person name="Liss P."/>
            <person name="Perna N.T."/>
            <person name="Rose D.J."/>
            <person name="Mau B."/>
            <person name="Zhou S."/>
            <person name="Schwartz D.C."/>
            <person name="Fetherston J.D."/>
            <person name="Lindler L.E."/>
            <person name="Brubaker R.R."/>
            <person name="Plano G.V."/>
            <person name="Straley S.C."/>
            <person name="McDonough K.A."/>
            <person name="Nilles M.L."/>
            <person name="Matson J.S."/>
            <person name="Blattner F.R."/>
            <person name="Perry R.D."/>
        </authorList>
    </citation>
    <scope>NUCLEOTIDE SEQUENCE [LARGE SCALE GENOMIC DNA]</scope>
    <source>
        <strain>KIM10+ / Biovar Mediaevalis</strain>
    </source>
</reference>
<reference key="3">
    <citation type="journal article" date="2004" name="DNA Res.">
        <title>Complete genome sequence of Yersinia pestis strain 91001, an isolate avirulent to humans.</title>
        <authorList>
            <person name="Song Y."/>
            <person name="Tong Z."/>
            <person name="Wang J."/>
            <person name="Wang L."/>
            <person name="Guo Z."/>
            <person name="Han Y."/>
            <person name="Zhang J."/>
            <person name="Pei D."/>
            <person name="Zhou D."/>
            <person name="Qin H."/>
            <person name="Pang X."/>
            <person name="Han Y."/>
            <person name="Zhai J."/>
            <person name="Li M."/>
            <person name="Cui B."/>
            <person name="Qi Z."/>
            <person name="Jin L."/>
            <person name="Dai R."/>
            <person name="Chen F."/>
            <person name="Li S."/>
            <person name="Ye C."/>
            <person name="Du Z."/>
            <person name="Lin W."/>
            <person name="Wang J."/>
            <person name="Yu J."/>
            <person name="Yang H."/>
            <person name="Wang J."/>
            <person name="Huang P."/>
            <person name="Yang R."/>
        </authorList>
    </citation>
    <scope>NUCLEOTIDE SEQUENCE [LARGE SCALE GENOMIC DNA]</scope>
    <source>
        <strain>91001 / Biovar Mediaevalis</strain>
    </source>
</reference>
<name>Y2563_YERPE</name>
<proteinExistence type="inferred from homology"/>
<dbReference type="EMBL" id="AL590842">
    <property type="protein sequence ID" value="CAL21188.1"/>
    <property type="molecule type" value="Genomic_DNA"/>
</dbReference>
<dbReference type="EMBL" id="AE009952">
    <property type="protein sequence ID" value="AAM85193.1"/>
    <property type="status" value="ALT_INIT"/>
    <property type="molecule type" value="Genomic_DNA"/>
</dbReference>
<dbReference type="EMBL" id="AE017042">
    <property type="protein sequence ID" value="AAS62579.1"/>
    <property type="status" value="ALT_INIT"/>
    <property type="molecule type" value="Genomic_DNA"/>
</dbReference>
<dbReference type="PIR" id="AI0312">
    <property type="entry name" value="AI0312"/>
</dbReference>
<dbReference type="RefSeq" id="WP_002210286.1">
    <property type="nucleotide sequence ID" value="NZ_WUCM01000021.1"/>
</dbReference>
<dbReference type="RefSeq" id="YP_002347524.1">
    <property type="nucleotide sequence ID" value="NC_003143.1"/>
</dbReference>
<dbReference type="SMR" id="Q8ZDJ9"/>
<dbReference type="STRING" id="214092.YPO2563"/>
<dbReference type="PaxDb" id="214092-YPO2563"/>
<dbReference type="EnsemblBacteria" id="AAS62579">
    <property type="protein sequence ID" value="AAS62579"/>
    <property type="gene ID" value="YP_2374"/>
</dbReference>
<dbReference type="KEGG" id="ype:YPO2563"/>
<dbReference type="KEGG" id="ypk:y1624"/>
<dbReference type="KEGG" id="ypm:YP_2374"/>
<dbReference type="PATRIC" id="fig|214092.21.peg.2986"/>
<dbReference type="eggNOG" id="COG3013">
    <property type="taxonomic scope" value="Bacteria"/>
</dbReference>
<dbReference type="HOGENOM" id="CLU_101021_1_0_6"/>
<dbReference type="OMA" id="MYHALQV"/>
<dbReference type="OrthoDB" id="5589463at2"/>
<dbReference type="Proteomes" id="UP000000815">
    <property type="component" value="Chromosome"/>
</dbReference>
<dbReference type="Proteomes" id="UP000001019">
    <property type="component" value="Chromosome"/>
</dbReference>
<dbReference type="Proteomes" id="UP000002490">
    <property type="component" value="Chromosome"/>
</dbReference>
<dbReference type="Gene3D" id="1.10.287.680">
    <property type="entry name" value="Helix hairpin bin"/>
    <property type="match status" value="1"/>
</dbReference>
<dbReference type="Gene3D" id="1.10.3190.10">
    <property type="entry name" value="yfbu gene product, domain 2"/>
    <property type="match status" value="1"/>
</dbReference>
<dbReference type="HAMAP" id="MF_00762">
    <property type="entry name" value="UPF0304"/>
    <property type="match status" value="1"/>
</dbReference>
<dbReference type="InterPro" id="IPR005587">
    <property type="entry name" value="UPF0304_YfbU"/>
</dbReference>
<dbReference type="InterPro" id="IPR023146">
    <property type="entry name" value="YfbU_alpha-helical_sf"/>
</dbReference>
<dbReference type="InterPro" id="IPR023145">
    <property type="entry name" value="YfbU_helix-hairpin_sf"/>
</dbReference>
<dbReference type="NCBIfam" id="NF003936">
    <property type="entry name" value="PRK05445.1"/>
    <property type="match status" value="1"/>
</dbReference>
<dbReference type="Pfam" id="PF03887">
    <property type="entry name" value="YfbU"/>
    <property type="match status" value="1"/>
</dbReference>
<dbReference type="PIRSF" id="PIRSF006272">
    <property type="entry name" value="UCP006272"/>
    <property type="match status" value="1"/>
</dbReference>
<dbReference type="SUPFAM" id="SSF116960">
    <property type="entry name" value="YfbU-like"/>
    <property type="match status" value="1"/>
</dbReference>
<keyword id="KW-1185">Reference proteome</keyword>
<gene>
    <name type="ordered locus">YPO2563</name>
    <name type="ordered locus">y1624</name>
    <name type="ordered locus">YP_2374</name>
</gene>
<protein>
    <recommendedName>
        <fullName evidence="1">UPF0304 protein YPO2563/y1624/YP_2374</fullName>
    </recommendedName>
</protein>
<comment type="similarity">
    <text evidence="1">Belongs to the UPF0304 family.</text>
</comment>
<comment type="sequence caution" evidence="2">
    <conflict type="erroneous initiation">
        <sequence resource="EMBL-CDS" id="AAM85193"/>
    </conflict>
</comment>
<comment type="sequence caution" evidence="2">
    <conflict type="erroneous initiation">
        <sequence resource="EMBL-CDS" id="AAS62579"/>
    </conflict>
</comment>